<organism>
    <name type="scientific">Roseiflexus sp. (strain RS-1)</name>
    <dbReference type="NCBI Taxonomy" id="357808"/>
    <lineage>
        <taxon>Bacteria</taxon>
        <taxon>Bacillati</taxon>
        <taxon>Chloroflexota</taxon>
        <taxon>Chloroflexia</taxon>
        <taxon>Chloroflexales</taxon>
        <taxon>Roseiflexineae</taxon>
        <taxon>Roseiflexaceae</taxon>
        <taxon>Roseiflexus</taxon>
    </lineage>
</organism>
<protein>
    <recommendedName>
        <fullName evidence="1">Tryptophan synthase alpha chain</fullName>
        <ecNumber evidence="1">4.2.1.20</ecNumber>
    </recommendedName>
</protein>
<keyword id="KW-0028">Amino-acid biosynthesis</keyword>
<keyword id="KW-0057">Aromatic amino acid biosynthesis</keyword>
<keyword id="KW-0456">Lyase</keyword>
<keyword id="KW-0822">Tryptophan biosynthesis</keyword>
<dbReference type="EC" id="4.2.1.20" evidence="1"/>
<dbReference type="EMBL" id="CP000686">
    <property type="protein sequence ID" value="ABQ91315.1"/>
    <property type="molecule type" value="Genomic_DNA"/>
</dbReference>
<dbReference type="RefSeq" id="WP_011957659.1">
    <property type="nucleotide sequence ID" value="NC_009523.1"/>
</dbReference>
<dbReference type="SMR" id="A5UXG2"/>
<dbReference type="STRING" id="357808.RoseRS_2950"/>
<dbReference type="KEGG" id="rrs:RoseRS_2950"/>
<dbReference type="eggNOG" id="COG0159">
    <property type="taxonomic scope" value="Bacteria"/>
</dbReference>
<dbReference type="HOGENOM" id="CLU_016734_0_2_0"/>
<dbReference type="OrthoDB" id="9804578at2"/>
<dbReference type="UniPathway" id="UPA00035">
    <property type="reaction ID" value="UER00044"/>
</dbReference>
<dbReference type="Proteomes" id="UP000006554">
    <property type="component" value="Chromosome"/>
</dbReference>
<dbReference type="GO" id="GO:0005829">
    <property type="term" value="C:cytosol"/>
    <property type="evidence" value="ECO:0007669"/>
    <property type="project" value="TreeGrafter"/>
</dbReference>
<dbReference type="GO" id="GO:0004834">
    <property type="term" value="F:tryptophan synthase activity"/>
    <property type="evidence" value="ECO:0007669"/>
    <property type="project" value="UniProtKB-UniRule"/>
</dbReference>
<dbReference type="CDD" id="cd04724">
    <property type="entry name" value="Tryptophan_synthase_alpha"/>
    <property type="match status" value="1"/>
</dbReference>
<dbReference type="FunFam" id="3.20.20.70:FF:000037">
    <property type="entry name" value="Tryptophan synthase alpha chain"/>
    <property type="match status" value="1"/>
</dbReference>
<dbReference type="Gene3D" id="3.20.20.70">
    <property type="entry name" value="Aldolase class I"/>
    <property type="match status" value="1"/>
</dbReference>
<dbReference type="HAMAP" id="MF_00131">
    <property type="entry name" value="Trp_synth_alpha"/>
    <property type="match status" value="1"/>
</dbReference>
<dbReference type="InterPro" id="IPR013785">
    <property type="entry name" value="Aldolase_TIM"/>
</dbReference>
<dbReference type="InterPro" id="IPR011060">
    <property type="entry name" value="RibuloseP-bd_barrel"/>
</dbReference>
<dbReference type="InterPro" id="IPR002028">
    <property type="entry name" value="Trp_synthase_suA"/>
</dbReference>
<dbReference type="NCBIfam" id="TIGR00262">
    <property type="entry name" value="trpA"/>
    <property type="match status" value="1"/>
</dbReference>
<dbReference type="PANTHER" id="PTHR43406:SF1">
    <property type="entry name" value="TRYPTOPHAN SYNTHASE ALPHA CHAIN, CHLOROPLASTIC"/>
    <property type="match status" value="1"/>
</dbReference>
<dbReference type="PANTHER" id="PTHR43406">
    <property type="entry name" value="TRYPTOPHAN SYNTHASE, ALPHA CHAIN"/>
    <property type="match status" value="1"/>
</dbReference>
<dbReference type="Pfam" id="PF00290">
    <property type="entry name" value="Trp_syntA"/>
    <property type="match status" value="1"/>
</dbReference>
<dbReference type="SUPFAM" id="SSF51366">
    <property type="entry name" value="Ribulose-phoshate binding barrel"/>
    <property type="match status" value="1"/>
</dbReference>
<proteinExistence type="inferred from homology"/>
<name>TRPA_ROSS1</name>
<reference key="1">
    <citation type="submission" date="2007-04" db="EMBL/GenBank/DDBJ databases">
        <title>Complete sequence of Roseiflexus sp. RS-1.</title>
        <authorList>
            <consortium name="US DOE Joint Genome Institute"/>
            <person name="Copeland A."/>
            <person name="Lucas S."/>
            <person name="Lapidus A."/>
            <person name="Barry K."/>
            <person name="Detter J.C."/>
            <person name="Glavina del Rio T."/>
            <person name="Hammon N."/>
            <person name="Israni S."/>
            <person name="Dalin E."/>
            <person name="Tice H."/>
            <person name="Pitluck S."/>
            <person name="Chertkov O."/>
            <person name="Brettin T."/>
            <person name="Bruce D."/>
            <person name="Han C."/>
            <person name="Schmutz J."/>
            <person name="Larimer F."/>
            <person name="Land M."/>
            <person name="Hauser L."/>
            <person name="Kyrpides N."/>
            <person name="Mikhailova N."/>
            <person name="Bryant D.A."/>
            <person name="Richardson P."/>
        </authorList>
    </citation>
    <scope>NUCLEOTIDE SEQUENCE [LARGE SCALE GENOMIC DNA]</scope>
    <source>
        <strain>RS-1</strain>
    </source>
</reference>
<accession>A5UXG2</accession>
<gene>
    <name evidence="1" type="primary">trpA</name>
    <name type="ordered locus">RoseRS_2950</name>
</gene>
<comment type="function">
    <text evidence="1">The alpha subunit is responsible for the aldol cleavage of indoleglycerol phosphate to indole and glyceraldehyde 3-phosphate.</text>
</comment>
<comment type="catalytic activity">
    <reaction evidence="1">
        <text>(1S,2R)-1-C-(indol-3-yl)glycerol 3-phosphate + L-serine = D-glyceraldehyde 3-phosphate + L-tryptophan + H2O</text>
        <dbReference type="Rhea" id="RHEA:10532"/>
        <dbReference type="ChEBI" id="CHEBI:15377"/>
        <dbReference type="ChEBI" id="CHEBI:33384"/>
        <dbReference type="ChEBI" id="CHEBI:57912"/>
        <dbReference type="ChEBI" id="CHEBI:58866"/>
        <dbReference type="ChEBI" id="CHEBI:59776"/>
        <dbReference type="EC" id="4.2.1.20"/>
    </reaction>
</comment>
<comment type="pathway">
    <text evidence="1">Amino-acid biosynthesis; L-tryptophan biosynthesis; L-tryptophan from chorismate: step 5/5.</text>
</comment>
<comment type="subunit">
    <text evidence="1">Tetramer of two alpha and two beta chains.</text>
</comment>
<comment type="similarity">
    <text evidence="1">Belongs to the TrpA family.</text>
</comment>
<evidence type="ECO:0000255" key="1">
    <source>
        <dbReference type="HAMAP-Rule" id="MF_00131"/>
    </source>
</evidence>
<sequence length="261" mass="28031">MSRIAETFAYLRAAGRTALMPYLMTGYPERDSALELAPALEAAGADLFELGVPFSDPLADGATIQRASERALANGIRLEHCIETVAGLRKRGVRAPIVPMGYYNPFLQYGLERLARDMADAGADGLIIPDLPPEEAHECHAACRAHGLDLIFFVAPTTPDERIDRIAALASGFIYCVALTGVTGARRELWSGLPAFLERVRRRTSLPLVVGFGISSAAHVREAGRYAAGAIVASALINVIEQAPPGEYVARAVDFVRSLRG</sequence>
<feature type="chain" id="PRO_1000018274" description="Tryptophan synthase alpha chain">
    <location>
        <begin position="1"/>
        <end position="261"/>
    </location>
</feature>
<feature type="active site" description="Proton acceptor" evidence="1">
    <location>
        <position position="49"/>
    </location>
</feature>
<feature type="active site" description="Proton acceptor" evidence="1">
    <location>
        <position position="60"/>
    </location>
</feature>